<name>RL20_BARBK</name>
<gene>
    <name evidence="1" type="primary">rplT</name>
    <name type="ordered locus">BARBAKC583_1314</name>
</gene>
<evidence type="ECO:0000255" key="1">
    <source>
        <dbReference type="HAMAP-Rule" id="MF_00382"/>
    </source>
</evidence>
<evidence type="ECO:0000305" key="2"/>
<reference key="1">
    <citation type="submission" date="2006-12" db="EMBL/GenBank/DDBJ databases">
        <authorList>
            <person name="Hendrix L."/>
            <person name="Mohamoud Y."/>
            <person name="Radune D."/>
            <person name="Shvartsbeyn A."/>
            <person name="Daugherty S."/>
            <person name="Dodson R."/>
            <person name="Durkin A.S."/>
            <person name="Harkins D."/>
            <person name="Huot H."/>
            <person name="Kothari S.P."/>
            <person name="Madupu R."/>
            <person name="Li J."/>
            <person name="Nelson W.C."/>
            <person name="Shrivastava S."/>
            <person name="Giglio M.G."/>
            <person name="Haft D."/>
            <person name="Selengut J."/>
            <person name="Fraser-Ligget C."/>
            <person name="Seshadri R."/>
        </authorList>
    </citation>
    <scope>NUCLEOTIDE SEQUENCE [LARGE SCALE GENOMIC DNA]</scope>
    <source>
        <strain>ATCC 35685 / KC583 / Herrer 020/F12,63</strain>
    </source>
</reference>
<feature type="chain" id="PRO_1000048929" description="Large ribosomal subunit protein bL20">
    <location>
        <begin position="1"/>
        <end position="133"/>
    </location>
</feature>
<keyword id="KW-0687">Ribonucleoprotein</keyword>
<keyword id="KW-0689">Ribosomal protein</keyword>
<keyword id="KW-0694">RNA-binding</keyword>
<keyword id="KW-0699">rRNA-binding</keyword>
<organism>
    <name type="scientific">Bartonella bacilliformis (strain ATCC 35685 / KC583 / Herrer 020/F12,63)</name>
    <dbReference type="NCBI Taxonomy" id="360095"/>
    <lineage>
        <taxon>Bacteria</taxon>
        <taxon>Pseudomonadati</taxon>
        <taxon>Pseudomonadota</taxon>
        <taxon>Alphaproteobacteria</taxon>
        <taxon>Hyphomicrobiales</taxon>
        <taxon>Bartonellaceae</taxon>
        <taxon>Bartonella</taxon>
    </lineage>
</organism>
<protein>
    <recommendedName>
        <fullName evidence="1">Large ribosomal subunit protein bL20</fullName>
    </recommendedName>
    <alternativeName>
        <fullName evidence="2">50S ribosomal protein L20</fullName>
    </alternativeName>
</protein>
<comment type="function">
    <text evidence="1">Binds directly to 23S ribosomal RNA and is necessary for the in vitro assembly process of the 50S ribosomal subunit. It is not involved in the protein synthesizing functions of that subunit.</text>
</comment>
<comment type="similarity">
    <text evidence="1">Belongs to the bacterial ribosomal protein bL20 family.</text>
</comment>
<sequence>MARVKRGVTAHAKHKKILKQAEGFYGRRKNTIRAAKAAVDRSKQYAYRDRKNRKRTFRALWIQRINAAVRMEGLTYGRFIDGLSKAGIEIDRKVLSDIAIHEPTVFSALVASAKKALEYLKDTTPNAFEGAVK</sequence>
<dbReference type="EMBL" id="CP000524">
    <property type="protein sequence ID" value="ABM44635.1"/>
    <property type="molecule type" value="Genomic_DNA"/>
</dbReference>
<dbReference type="RefSeq" id="WP_005768100.1">
    <property type="nucleotide sequence ID" value="NC_008783.1"/>
</dbReference>
<dbReference type="SMR" id="A1UUA9"/>
<dbReference type="STRING" id="360095.BARBAKC583_1314"/>
<dbReference type="GeneID" id="4685081"/>
<dbReference type="KEGG" id="bbk:BARBAKC583_1314"/>
<dbReference type="PATRIC" id="fig|360095.6.peg.1286"/>
<dbReference type="eggNOG" id="COG0292">
    <property type="taxonomic scope" value="Bacteria"/>
</dbReference>
<dbReference type="HOGENOM" id="CLU_123265_0_1_5"/>
<dbReference type="OrthoDB" id="9808966at2"/>
<dbReference type="Proteomes" id="UP000000643">
    <property type="component" value="Chromosome"/>
</dbReference>
<dbReference type="GO" id="GO:1990904">
    <property type="term" value="C:ribonucleoprotein complex"/>
    <property type="evidence" value="ECO:0007669"/>
    <property type="project" value="UniProtKB-KW"/>
</dbReference>
<dbReference type="GO" id="GO:0005840">
    <property type="term" value="C:ribosome"/>
    <property type="evidence" value="ECO:0007669"/>
    <property type="project" value="UniProtKB-KW"/>
</dbReference>
<dbReference type="GO" id="GO:0019843">
    <property type="term" value="F:rRNA binding"/>
    <property type="evidence" value="ECO:0007669"/>
    <property type="project" value="UniProtKB-UniRule"/>
</dbReference>
<dbReference type="GO" id="GO:0003735">
    <property type="term" value="F:structural constituent of ribosome"/>
    <property type="evidence" value="ECO:0007669"/>
    <property type="project" value="InterPro"/>
</dbReference>
<dbReference type="GO" id="GO:0000027">
    <property type="term" value="P:ribosomal large subunit assembly"/>
    <property type="evidence" value="ECO:0007669"/>
    <property type="project" value="UniProtKB-UniRule"/>
</dbReference>
<dbReference type="GO" id="GO:0006412">
    <property type="term" value="P:translation"/>
    <property type="evidence" value="ECO:0007669"/>
    <property type="project" value="InterPro"/>
</dbReference>
<dbReference type="CDD" id="cd07026">
    <property type="entry name" value="Ribosomal_L20"/>
    <property type="match status" value="1"/>
</dbReference>
<dbReference type="FunFam" id="1.10.1900.20:FF:000001">
    <property type="entry name" value="50S ribosomal protein L20"/>
    <property type="match status" value="1"/>
</dbReference>
<dbReference type="Gene3D" id="6.10.160.10">
    <property type="match status" value="1"/>
</dbReference>
<dbReference type="Gene3D" id="1.10.1900.20">
    <property type="entry name" value="Ribosomal protein L20"/>
    <property type="match status" value="1"/>
</dbReference>
<dbReference type="HAMAP" id="MF_00382">
    <property type="entry name" value="Ribosomal_bL20"/>
    <property type="match status" value="1"/>
</dbReference>
<dbReference type="InterPro" id="IPR005813">
    <property type="entry name" value="Ribosomal_bL20"/>
</dbReference>
<dbReference type="InterPro" id="IPR049946">
    <property type="entry name" value="RIBOSOMAL_L20_CS"/>
</dbReference>
<dbReference type="InterPro" id="IPR035566">
    <property type="entry name" value="Ribosomal_protein_bL20_C"/>
</dbReference>
<dbReference type="NCBIfam" id="TIGR01032">
    <property type="entry name" value="rplT_bact"/>
    <property type="match status" value="1"/>
</dbReference>
<dbReference type="PANTHER" id="PTHR10986">
    <property type="entry name" value="39S RIBOSOMAL PROTEIN L20"/>
    <property type="match status" value="1"/>
</dbReference>
<dbReference type="Pfam" id="PF00453">
    <property type="entry name" value="Ribosomal_L20"/>
    <property type="match status" value="1"/>
</dbReference>
<dbReference type="PRINTS" id="PR00062">
    <property type="entry name" value="RIBOSOMALL20"/>
</dbReference>
<dbReference type="SUPFAM" id="SSF74731">
    <property type="entry name" value="Ribosomal protein L20"/>
    <property type="match status" value="1"/>
</dbReference>
<dbReference type="PROSITE" id="PS00937">
    <property type="entry name" value="RIBOSOMAL_L20"/>
    <property type="match status" value="1"/>
</dbReference>
<accession>A1UUA9</accession>
<proteinExistence type="inferred from homology"/>